<reference key="1">
    <citation type="journal article" date="1994" name="Biochim. Biophys. Acta">
        <title>Characterization of the synthesis and expression of the GTA-kinase from transformed and normal rodent cells.</title>
        <authorList>
            <person name="Kerr M."/>
            <person name="Fischer J.E."/>
            <person name="Purushotham K.R."/>
            <person name="Gao D."/>
            <person name="Nakagawa Y."/>
            <person name="Maeda N."/>
            <person name="Ghanta V."/>
            <person name="Hiramoto R."/>
            <person name="Chegini N."/>
            <person name="Humphreys-Beher M.G."/>
        </authorList>
    </citation>
    <scope>NUCLEOTIDE SEQUENCE [MRNA]</scope>
    <source>
        <strain>Sprague-Dawley</strain>
        <tissue>Salivary gland</tissue>
    </source>
</reference>
<reference key="2">
    <citation type="journal article" date="2012" name="Nat. Commun.">
        <title>Quantitative maps of protein phosphorylation sites across 14 different rat organs and tissues.</title>
        <authorList>
            <person name="Lundby A."/>
            <person name="Secher A."/>
            <person name="Lage K."/>
            <person name="Nordsborg N.B."/>
            <person name="Dmytriyev A."/>
            <person name="Lundby C."/>
            <person name="Olsen J.V."/>
        </authorList>
    </citation>
    <scope>PHOSPHORYLATION [LARGE SCALE ANALYSIS] AT THR-236</scope>
    <scope>IDENTIFICATION BY MASS SPECTROMETRY [LARGE SCALE ANALYSIS]</scope>
</reference>
<protein>
    <recommendedName>
        <fullName>Cyclin-dependent kinase 11B</fullName>
    </recommendedName>
    <alternativeName>
        <fullName>Cell division cycle 2-like protein kinase 1</fullName>
    </alternativeName>
    <alternativeName>
        <fullName>Cell division protein kinase 11</fullName>
    </alternativeName>
    <alternativeName>
        <fullName>Cyclin-dependent kinase 11</fullName>
        <ecNumber>2.7.11.22</ecNumber>
    </alternativeName>
    <alternativeName>
        <fullName>Galactosyltransferase-associated protein kinase p58/GTA</fullName>
    </alternativeName>
    <alternativeName>
        <fullName>PITSLRE serine/threonine-protein kinase CDC2L1</fullName>
    </alternativeName>
</protein>
<feature type="chain" id="PRO_0000085710" description="Cyclin-dependent kinase 11B">
    <location>
        <begin position="1"/>
        <end position="436"/>
    </location>
</feature>
<feature type="domain" description="Protein kinase" evidence="4">
    <location>
        <begin position="79"/>
        <end position="364"/>
    </location>
</feature>
<feature type="region of interest" description="Calmodulin-binding" evidence="3">
    <location>
        <begin position="30"/>
        <end position="44"/>
    </location>
</feature>
<feature type="region of interest" description="Disordered" evidence="6">
    <location>
        <begin position="383"/>
        <end position="406"/>
    </location>
</feature>
<feature type="short sequence motif" description="Nuclear localization signal" evidence="3">
    <location>
        <begin position="25"/>
        <end position="30"/>
    </location>
</feature>
<feature type="active site" description="Proton acceptor" evidence="4 5">
    <location>
        <position position="203"/>
    </location>
</feature>
<feature type="binding site" evidence="4">
    <location>
        <begin position="85"/>
        <end position="93"/>
    </location>
    <ligand>
        <name>ATP</name>
        <dbReference type="ChEBI" id="CHEBI:30616"/>
    </ligand>
</feature>
<feature type="binding site" evidence="4">
    <location>
        <position position="108"/>
    </location>
    <ligand>
        <name>ATP</name>
        <dbReference type="ChEBI" id="CHEBI:30616"/>
    </ligand>
</feature>
<feature type="modified residue" description="Phosphoserine; by CDK7" evidence="1">
    <location>
        <position position="123"/>
    </location>
</feature>
<feature type="modified residue" description="Phosphothreonine; by CDK7" evidence="1">
    <location>
        <position position="129"/>
    </location>
</feature>
<feature type="modified residue" description="Phosphoserine" evidence="1">
    <location>
        <position position="230"/>
    </location>
</feature>
<feature type="modified residue" description="Phosphotyrosine" evidence="1">
    <location>
        <position position="235"/>
    </location>
</feature>
<feature type="modified residue" description="Phosphothreonine" evidence="8">
    <location>
        <position position="236"/>
    </location>
</feature>
<feature type="modified residue" description="Phosphothreonine" evidence="2">
    <location>
        <position position="392"/>
    </location>
</feature>
<feature type="modified residue" description="Phosphoserine" evidence="2">
    <location>
        <position position="393"/>
    </location>
</feature>
<feature type="cross-link" description="Glycyl lysine isopeptide (Lys-Gly) (interchain with G-Cter in SUMO2)" evidence="1">
    <location>
        <position position="282"/>
    </location>
</feature>
<keyword id="KW-0067">ATP-binding</keyword>
<keyword id="KW-0131">Cell cycle</keyword>
<keyword id="KW-0963">Cytoplasm</keyword>
<keyword id="KW-1017">Isopeptide bond</keyword>
<keyword id="KW-0418">Kinase</keyword>
<keyword id="KW-0472">Membrane</keyword>
<keyword id="KW-0547">Nucleotide-binding</keyword>
<keyword id="KW-0539">Nucleus</keyword>
<keyword id="KW-0597">Phosphoprotein</keyword>
<keyword id="KW-1185">Reference proteome</keyword>
<keyword id="KW-0723">Serine/threonine-protein kinase</keyword>
<keyword id="KW-0808">Transferase</keyword>
<keyword id="KW-0832">Ubl conjugation</keyword>
<name>CD11B_RAT</name>
<accession>P46892</accession>
<sequence length="436" mass="49547">MKSEKSRTTSWLFQSHEVTEILGRVKKNRKKLVKGLHRAGPPPEKNYLPDSPALSPIELKQELPKYLPALQGCRSVEEFQCLNRIEEGTYGVVYRAKDKKTDEIVALKRLKMEKEKEGFPLTSIREINTILKAQHPNIVTVREIVVGSNMDKIYIVMNYVEHDLKSLMETMKQPFLPGEVKTLMIQLLSGVKHLHDNWILHRDLKTSNLLLTHAGILKVGDFGLAREYGSPLKAYTPVVVTLWYRAPELLLGAKEYSTACDMWSVGCIFGELLTQKPLFPGKSDIDQINKIFKDIGTPSEKIWPGYSELPAVKKMTFSELPYNNLRKRFGALLSDQGFDLMNKFLTYYPGRRINAEDGLKHEYFRETPLPIDPSMFPTWPAKSEQQCVKRGTSPKPPEGGLGYSQLGDDDLKETGFHLTTTNDGAVSCRPWCSLLF</sequence>
<proteinExistence type="evidence at protein level"/>
<gene>
    <name type="primary">Cdk11b</name>
    <name type="synonym">Cdc2l1</name>
    <name type="synonym">Cdk11</name>
</gene>
<comment type="function">
    <text evidence="1">Plays multiple roles in cell cycle progression, cytokinesis and apoptosis. Involved in pre-mRNA splicing in a kinase activity-dependent manner. May act as a negative regulator of normal cell cycle progression.</text>
</comment>
<comment type="catalytic activity">
    <reaction>
        <text>L-seryl-[protein] + ATP = O-phospho-L-seryl-[protein] + ADP + H(+)</text>
        <dbReference type="Rhea" id="RHEA:17989"/>
        <dbReference type="Rhea" id="RHEA-COMP:9863"/>
        <dbReference type="Rhea" id="RHEA-COMP:11604"/>
        <dbReference type="ChEBI" id="CHEBI:15378"/>
        <dbReference type="ChEBI" id="CHEBI:29999"/>
        <dbReference type="ChEBI" id="CHEBI:30616"/>
        <dbReference type="ChEBI" id="CHEBI:83421"/>
        <dbReference type="ChEBI" id="CHEBI:456216"/>
        <dbReference type="EC" id="2.7.11.22"/>
    </reaction>
</comment>
<comment type="catalytic activity">
    <reaction>
        <text>L-threonyl-[protein] + ATP = O-phospho-L-threonyl-[protein] + ADP + H(+)</text>
        <dbReference type="Rhea" id="RHEA:46608"/>
        <dbReference type="Rhea" id="RHEA-COMP:11060"/>
        <dbReference type="Rhea" id="RHEA-COMP:11605"/>
        <dbReference type="ChEBI" id="CHEBI:15378"/>
        <dbReference type="ChEBI" id="CHEBI:30013"/>
        <dbReference type="ChEBI" id="CHEBI:30616"/>
        <dbReference type="ChEBI" id="CHEBI:61977"/>
        <dbReference type="ChEBI" id="CHEBI:456216"/>
        <dbReference type="EC" id="2.7.11.22"/>
    </reaction>
</comment>
<comment type="cofactor">
    <cofactor>
        <name>Mg(2+)</name>
        <dbReference type="ChEBI" id="CHEBI:18420"/>
    </cofactor>
</comment>
<comment type="subunit">
    <text evidence="1">May interact PAK1 and RANBP9. p110C interacts with RNPS1. Interacts with CCND3. Interacts with CCNL1 and CCNL2. Forms complexes with pre-mRNA-splicing factors, including at least SRSF1, SRSF2 AND SRSF7/SLU7.</text>
</comment>
<comment type="subcellular location">
    <subcellularLocation>
        <location>Cytoplasm</location>
    </subcellularLocation>
    <subcellularLocation>
        <location>Nucleus membrane</location>
        <topology>Peripheral membrane protein</topology>
    </subcellularLocation>
    <subcellularLocation>
        <location>Endomembrane system</location>
        <topology>Peripheral membrane protein</topology>
    </subcellularLocation>
    <subcellularLocation>
        <location>Cytoplasm</location>
        <location>Perinuclear region</location>
    </subcellularLocation>
</comment>
<comment type="similarity">
    <text evidence="7">Belongs to the protein kinase superfamily. CMGC Ser/Thr protein kinase family. CDC2/CDKX subfamily.</text>
</comment>
<comment type="sequence caution" evidence="7">
    <conflict type="erroneous initiation">
        <sequence resource="EMBL-CDS" id="AAA88509"/>
    </conflict>
    <text>Extended N-terminus.</text>
</comment>
<dbReference type="EC" id="2.7.11.22"/>
<dbReference type="EMBL" id="L24388">
    <property type="protein sequence ID" value="AAA88509.1"/>
    <property type="status" value="ALT_INIT"/>
    <property type="molecule type" value="mRNA"/>
</dbReference>
<dbReference type="PIR" id="S47628">
    <property type="entry name" value="S47628"/>
</dbReference>
<dbReference type="SMR" id="P46892"/>
<dbReference type="FunCoup" id="P46892">
    <property type="interactions" value="1859"/>
</dbReference>
<dbReference type="STRING" id="10116.ENSRNOP00000023274"/>
<dbReference type="iPTMnet" id="P46892"/>
<dbReference type="PhosphoSitePlus" id="P46892"/>
<dbReference type="jPOST" id="P46892"/>
<dbReference type="PaxDb" id="10116-ENSRNOP00000039105"/>
<dbReference type="AGR" id="RGD:628604"/>
<dbReference type="RGD" id="628604">
    <property type="gene designation" value="Cdk11b"/>
</dbReference>
<dbReference type="eggNOG" id="KOG0663">
    <property type="taxonomic scope" value="Eukaryota"/>
</dbReference>
<dbReference type="InParanoid" id="P46892"/>
<dbReference type="PhylomeDB" id="P46892"/>
<dbReference type="BRENDA" id="2.7.11.22">
    <property type="organism ID" value="5301"/>
</dbReference>
<dbReference type="Reactome" id="R-RNO-380270">
    <property type="pathway name" value="Recruitment of mitotic centrosome proteins and complexes"/>
</dbReference>
<dbReference type="PRO" id="PR:P46892"/>
<dbReference type="Proteomes" id="UP000002494">
    <property type="component" value="Unplaced"/>
</dbReference>
<dbReference type="GO" id="GO:0031965">
    <property type="term" value="C:nuclear membrane"/>
    <property type="evidence" value="ECO:0007669"/>
    <property type="project" value="UniProtKB-SubCell"/>
</dbReference>
<dbReference type="GO" id="GO:0005634">
    <property type="term" value="C:nucleus"/>
    <property type="evidence" value="ECO:0000266"/>
    <property type="project" value="RGD"/>
</dbReference>
<dbReference type="GO" id="GO:0048471">
    <property type="term" value="C:perinuclear region of cytoplasm"/>
    <property type="evidence" value="ECO:0007669"/>
    <property type="project" value="UniProtKB-SubCell"/>
</dbReference>
<dbReference type="GO" id="GO:0005524">
    <property type="term" value="F:ATP binding"/>
    <property type="evidence" value="ECO:0000266"/>
    <property type="project" value="RGD"/>
</dbReference>
<dbReference type="GO" id="GO:0004693">
    <property type="term" value="F:cyclin-dependent protein serine/threonine kinase activity"/>
    <property type="evidence" value="ECO:0007669"/>
    <property type="project" value="UniProtKB-EC"/>
</dbReference>
<dbReference type="GO" id="GO:0106310">
    <property type="term" value="F:protein serine kinase activity"/>
    <property type="evidence" value="ECO:0007669"/>
    <property type="project" value="RHEA"/>
</dbReference>
<dbReference type="GO" id="GO:0004674">
    <property type="term" value="F:protein serine/threonine kinase activity"/>
    <property type="evidence" value="ECO:0000266"/>
    <property type="project" value="RGD"/>
</dbReference>
<dbReference type="GO" id="GO:0001824">
    <property type="term" value="P:blastocyst development"/>
    <property type="evidence" value="ECO:0000266"/>
    <property type="project" value="RGD"/>
</dbReference>
<dbReference type="GO" id="GO:2001234">
    <property type="term" value="P:negative regulation of apoptotic signaling pathway"/>
    <property type="evidence" value="ECO:0000266"/>
    <property type="project" value="RGD"/>
</dbReference>
<dbReference type="GO" id="GO:0051726">
    <property type="term" value="P:regulation of cell cycle"/>
    <property type="evidence" value="ECO:0000318"/>
    <property type="project" value="GO_Central"/>
</dbReference>
<dbReference type="GO" id="GO:0001558">
    <property type="term" value="P:regulation of cell growth"/>
    <property type="evidence" value="ECO:0000266"/>
    <property type="project" value="RGD"/>
</dbReference>
<dbReference type="GO" id="GO:0007088">
    <property type="term" value="P:regulation of mitotic nuclear division"/>
    <property type="evidence" value="ECO:0000266"/>
    <property type="project" value="RGD"/>
</dbReference>
<dbReference type="GO" id="GO:0050684">
    <property type="term" value="P:regulation of mRNA processing"/>
    <property type="evidence" value="ECO:0000266"/>
    <property type="project" value="RGD"/>
</dbReference>
<dbReference type="CDD" id="cd07843">
    <property type="entry name" value="STKc_CDC2L1"/>
    <property type="match status" value="1"/>
</dbReference>
<dbReference type="FunFam" id="3.30.200.20:FF:000054">
    <property type="entry name" value="Cyclin-dependent kinase 11B"/>
    <property type="match status" value="1"/>
</dbReference>
<dbReference type="FunFam" id="1.10.510.10:FF:000124">
    <property type="entry name" value="cyclin-dependent kinase 11B isoform X1"/>
    <property type="match status" value="1"/>
</dbReference>
<dbReference type="Gene3D" id="3.30.200.20">
    <property type="entry name" value="Phosphorylase Kinase, domain 1"/>
    <property type="match status" value="1"/>
</dbReference>
<dbReference type="Gene3D" id="1.10.510.10">
    <property type="entry name" value="Transferase(Phosphotransferase) domain 1"/>
    <property type="match status" value="1"/>
</dbReference>
<dbReference type="InterPro" id="IPR050108">
    <property type="entry name" value="CDK"/>
</dbReference>
<dbReference type="InterPro" id="IPR045267">
    <property type="entry name" value="CDK11/PITSLRE_STKc"/>
</dbReference>
<dbReference type="InterPro" id="IPR011009">
    <property type="entry name" value="Kinase-like_dom_sf"/>
</dbReference>
<dbReference type="InterPro" id="IPR000719">
    <property type="entry name" value="Prot_kinase_dom"/>
</dbReference>
<dbReference type="InterPro" id="IPR008271">
    <property type="entry name" value="Ser/Thr_kinase_AS"/>
</dbReference>
<dbReference type="PANTHER" id="PTHR24056">
    <property type="entry name" value="CELL DIVISION PROTEIN KINASE"/>
    <property type="match status" value="1"/>
</dbReference>
<dbReference type="PANTHER" id="PTHR24056:SF107">
    <property type="entry name" value="CYCLIN-DEPENDENT KINASE 11A-RELATED"/>
    <property type="match status" value="1"/>
</dbReference>
<dbReference type="Pfam" id="PF00069">
    <property type="entry name" value="Pkinase"/>
    <property type="match status" value="1"/>
</dbReference>
<dbReference type="SMART" id="SM00220">
    <property type="entry name" value="S_TKc"/>
    <property type="match status" value="1"/>
</dbReference>
<dbReference type="SUPFAM" id="SSF56112">
    <property type="entry name" value="Protein kinase-like (PK-like)"/>
    <property type="match status" value="1"/>
</dbReference>
<dbReference type="PROSITE" id="PS50011">
    <property type="entry name" value="PROTEIN_KINASE_DOM"/>
    <property type="match status" value="1"/>
</dbReference>
<dbReference type="PROSITE" id="PS00108">
    <property type="entry name" value="PROTEIN_KINASE_ST"/>
    <property type="match status" value="1"/>
</dbReference>
<evidence type="ECO:0000250" key="1">
    <source>
        <dbReference type="UniProtKB" id="P21127"/>
    </source>
</evidence>
<evidence type="ECO:0000250" key="2">
    <source>
        <dbReference type="UniProtKB" id="P24788"/>
    </source>
</evidence>
<evidence type="ECO:0000255" key="3"/>
<evidence type="ECO:0000255" key="4">
    <source>
        <dbReference type="PROSITE-ProRule" id="PRU00159"/>
    </source>
</evidence>
<evidence type="ECO:0000255" key="5">
    <source>
        <dbReference type="PROSITE-ProRule" id="PRU10027"/>
    </source>
</evidence>
<evidence type="ECO:0000256" key="6">
    <source>
        <dbReference type="SAM" id="MobiDB-lite"/>
    </source>
</evidence>
<evidence type="ECO:0000305" key="7"/>
<evidence type="ECO:0007744" key="8">
    <source>
    </source>
</evidence>
<organism>
    <name type="scientific">Rattus norvegicus</name>
    <name type="common">Rat</name>
    <dbReference type="NCBI Taxonomy" id="10116"/>
    <lineage>
        <taxon>Eukaryota</taxon>
        <taxon>Metazoa</taxon>
        <taxon>Chordata</taxon>
        <taxon>Craniata</taxon>
        <taxon>Vertebrata</taxon>
        <taxon>Euteleostomi</taxon>
        <taxon>Mammalia</taxon>
        <taxon>Eutheria</taxon>
        <taxon>Euarchontoglires</taxon>
        <taxon>Glires</taxon>
        <taxon>Rodentia</taxon>
        <taxon>Myomorpha</taxon>
        <taxon>Muroidea</taxon>
        <taxon>Muridae</taxon>
        <taxon>Murinae</taxon>
        <taxon>Rattus</taxon>
    </lineage>
</organism>